<keyword id="KW-0328">Glycosyltransferase</keyword>
<keyword id="KW-0441">Lipid A biosynthesis</keyword>
<keyword id="KW-0444">Lipid biosynthesis</keyword>
<keyword id="KW-0443">Lipid metabolism</keyword>
<keyword id="KW-0808">Transferase</keyword>
<feature type="chain" id="PRO_0000255179" description="Lipid-A-disaccharide synthase">
    <location>
        <begin position="1"/>
        <end position="382"/>
    </location>
</feature>
<reference key="1">
    <citation type="journal article" date="2006" name="Proc. Natl. Acad. Sci. U.S.A.">
        <title>Identification of genes subject to positive selection in uropathogenic strains of Escherichia coli: a comparative genomics approach.</title>
        <authorList>
            <person name="Chen S.L."/>
            <person name="Hung C.-S."/>
            <person name="Xu J."/>
            <person name="Reigstad C.S."/>
            <person name="Magrini V."/>
            <person name="Sabo A."/>
            <person name="Blasiar D."/>
            <person name="Bieri T."/>
            <person name="Meyer R.R."/>
            <person name="Ozersky P."/>
            <person name="Armstrong J.R."/>
            <person name="Fulton R.S."/>
            <person name="Latreille J.P."/>
            <person name="Spieth J."/>
            <person name="Hooton T.M."/>
            <person name="Mardis E.R."/>
            <person name="Hultgren S.J."/>
            <person name="Gordon J.I."/>
        </authorList>
    </citation>
    <scope>NUCLEOTIDE SEQUENCE [LARGE SCALE GENOMIC DNA]</scope>
    <source>
        <strain>UTI89 / UPEC</strain>
    </source>
</reference>
<proteinExistence type="inferred from homology"/>
<dbReference type="EC" id="2.4.1.182" evidence="1"/>
<dbReference type="EMBL" id="CP000243">
    <property type="protein sequence ID" value="ABE05707.1"/>
    <property type="molecule type" value="Genomic_DNA"/>
</dbReference>
<dbReference type="RefSeq" id="WP_000139678.1">
    <property type="nucleotide sequence ID" value="NZ_CP064825.1"/>
</dbReference>
<dbReference type="SMR" id="Q1RG07"/>
<dbReference type="CAZy" id="GT19">
    <property type="family name" value="Glycosyltransferase Family 19"/>
</dbReference>
<dbReference type="KEGG" id="eci:UTI89_C0197"/>
<dbReference type="HOGENOM" id="CLU_036577_3_0_6"/>
<dbReference type="UniPathway" id="UPA00359">
    <property type="reaction ID" value="UER00481"/>
</dbReference>
<dbReference type="Proteomes" id="UP000001952">
    <property type="component" value="Chromosome"/>
</dbReference>
<dbReference type="GO" id="GO:0016020">
    <property type="term" value="C:membrane"/>
    <property type="evidence" value="ECO:0007669"/>
    <property type="project" value="GOC"/>
</dbReference>
<dbReference type="GO" id="GO:0008915">
    <property type="term" value="F:lipid-A-disaccharide synthase activity"/>
    <property type="evidence" value="ECO:0007669"/>
    <property type="project" value="UniProtKB-UniRule"/>
</dbReference>
<dbReference type="GO" id="GO:0005543">
    <property type="term" value="F:phospholipid binding"/>
    <property type="evidence" value="ECO:0007669"/>
    <property type="project" value="TreeGrafter"/>
</dbReference>
<dbReference type="GO" id="GO:0009245">
    <property type="term" value="P:lipid A biosynthetic process"/>
    <property type="evidence" value="ECO:0007669"/>
    <property type="project" value="UniProtKB-UniRule"/>
</dbReference>
<dbReference type="CDD" id="cd01635">
    <property type="entry name" value="Glycosyltransferase_GTB-type"/>
    <property type="match status" value="1"/>
</dbReference>
<dbReference type="HAMAP" id="MF_00392">
    <property type="entry name" value="LpxB"/>
    <property type="match status" value="1"/>
</dbReference>
<dbReference type="InterPro" id="IPR003835">
    <property type="entry name" value="Glyco_trans_19"/>
</dbReference>
<dbReference type="NCBIfam" id="TIGR00215">
    <property type="entry name" value="lpxB"/>
    <property type="match status" value="1"/>
</dbReference>
<dbReference type="PANTHER" id="PTHR30372">
    <property type="entry name" value="LIPID-A-DISACCHARIDE SYNTHASE"/>
    <property type="match status" value="1"/>
</dbReference>
<dbReference type="PANTHER" id="PTHR30372:SF4">
    <property type="entry name" value="LIPID-A-DISACCHARIDE SYNTHASE, MITOCHONDRIAL-RELATED"/>
    <property type="match status" value="1"/>
</dbReference>
<dbReference type="Pfam" id="PF02684">
    <property type="entry name" value="LpxB"/>
    <property type="match status" value="1"/>
</dbReference>
<dbReference type="SUPFAM" id="SSF53756">
    <property type="entry name" value="UDP-Glycosyltransferase/glycogen phosphorylase"/>
    <property type="match status" value="1"/>
</dbReference>
<name>LPXB_ECOUT</name>
<protein>
    <recommendedName>
        <fullName evidence="1">Lipid-A-disaccharide synthase</fullName>
        <ecNumber evidence="1">2.4.1.182</ecNumber>
    </recommendedName>
</protein>
<accession>Q1RG07</accession>
<gene>
    <name evidence="1" type="primary">lpxB</name>
    <name type="ordered locus">UTI89_C0197</name>
</gene>
<sequence>MTEQRPLTIALVAGETSGDILGAGLIRALKERVPNARFVGVAGPRMQAEGCEAWYEMEELAVMGIVEVLGRLRRLLHIRADLTKRFGELKPDVFVGIDAPDFNITLEGNLKKQGIKTIHYVSPSVWAWRQKRVFKIGRATDLVLAFLPFEKAFYDKYNVPCRFIGHTMADAMPLDPDKNGARDVLGIPYDAHCLALLPGSRGAEVEMLSADFLKTAQLLRQTYPDLEIVVPLVNAKRREQFERIKAAVAPDLSVHLLDGMGREAMVASDAALLASGTAALECMLAKCPMVVGYRMKPFTFWLAKRLVKTDYVSLPNLLAGRELVKELLQEECEPQKLAAALLPLLANGKTSHAMHDTFRELHQQIRCNADEQAAQAVLELAQ</sequence>
<organism>
    <name type="scientific">Escherichia coli (strain UTI89 / UPEC)</name>
    <dbReference type="NCBI Taxonomy" id="364106"/>
    <lineage>
        <taxon>Bacteria</taxon>
        <taxon>Pseudomonadati</taxon>
        <taxon>Pseudomonadota</taxon>
        <taxon>Gammaproteobacteria</taxon>
        <taxon>Enterobacterales</taxon>
        <taxon>Enterobacteriaceae</taxon>
        <taxon>Escherichia</taxon>
    </lineage>
</organism>
<evidence type="ECO:0000255" key="1">
    <source>
        <dbReference type="HAMAP-Rule" id="MF_00392"/>
    </source>
</evidence>
<comment type="function">
    <text evidence="1">Condensation of UDP-2,3-diacylglucosamine and 2,3-diacylglucosamine-1-phosphate to form lipid A disaccharide, a precursor of lipid A, a phosphorylated glycolipid that anchors the lipopolysaccharide to the outer membrane of the cell.</text>
</comment>
<comment type="catalytic activity">
    <reaction evidence="1">
        <text>2-N,3-O-bis[(3R)-3-hydroxytetradecanoyl]-alpha-D-glucosaminyl 1-phosphate + UDP-2-N,3-O-bis[(3R)-3-hydroxytetradecanoyl]-alpha-D-glucosamine = lipid A disaccharide (E. coli) + UDP + H(+)</text>
        <dbReference type="Rhea" id="RHEA:22668"/>
        <dbReference type="ChEBI" id="CHEBI:15378"/>
        <dbReference type="ChEBI" id="CHEBI:57957"/>
        <dbReference type="ChEBI" id="CHEBI:58223"/>
        <dbReference type="ChEBI" id="CHEBI:58466"/>
        <dbReference type="ChEBI" id="CHEBI:78847"/>
    </reaction>
</comment>
<comment type="catalytic activity">
    <reaction evidence="1">
        <text>a lipid X + a UDP-2-N,3-O-bis[(3R)-3-hydroxyacyl]-alpha-D-glucosamine = a lipid A disaccharide + UDP + H(+)</text>
        <dbReference type="Rhea" id="RHEA:67828"/>
        <dbReference type="ChEBI" id="CHEBI:15378"/>
        <dbReference type="ChEBI" id="CHEBI:58223"/>
        <dbReference type="ChEBI" id="CHEBI:137748"/>
        <dbReference type="ChEBI" id="CHEBI:176338"/>
        <dbReference type="ChEBI" id="CHEBI:176343"/>
        <dbReference type="EC" id="2.4.1.182"/>
    </reaction>
</comment>
<comment type="pathway">
    <text evidence="1">Glycolipid biosynthesis; lipid IV(A) biosynthesis; lipid IV(A) from (3R)-3-hydroxytetradecanoyl-[acyl-carrier-protein] and UDP-N-acetyl-alpha-D-glucosamine: step 5/6.</text>
</comment>
<comment type="similarity">
    <text evidence="1">Belongs to the LpxB family.</text>
</comment>